<proteinExistence type="inferred from homology"/>
<evidence type="ECO:0000255" key="1">
    <source>
        <dbReference type="HAMAP-Rule" id="MF_01416"/>
    </source>
</evidence>
<name>ATPD_EHRRW</name>
<dbReference type="EMBL" id="CR767821">
    <property type="protein sequence ID" value="CAH57797.1"/>
    <property type="molecule type" value="Genomic_DNA"/>
</dbReference>
<dbReference type="EMBL" id="CR925678">
    <property type="protein sequence ID" value="CAI26572.1"/>
    <property type="molecule type" value="Genomic_DNA"/>
</dbReference>
<dbReference type="RefSeq" id="WP_011154766.1">
    <property type="nucleotide sequence ID" value="NC_005295.2"/>
</dbReference>
<dbReference type="SMR" id="Q5HC94"/>
<dbReference type="GeneID" id="33058147"/>
<dbReference type="KEGG" id="eru:Erum0830"/>
<dbReference type="KEGG" id="erw:ERWE_CDS_00780"/>
<dbReference type="eggNOG" id="COG0712">
    <property type="taxonomic scope" value="Bacteria"/>
</dbReference>
<dbReference type="HOGENOM" id="CLU_085114_2_0_5"/>
<dbReference type="Proteomes" id="UP000001021">
    <property type="component" value="Chromosome"/>
</dbReference>
<dbReference type="GO" id="GO:0005886">
    <property type="term" value="C:plasma membrane"/>
    <property type="evidence" value="ECO:0007669"/>
    <property type="project" value="UniProtKB-SubCell"/>
</dbReference>
<dbReference type="GO" id="GO:0045259">
    <property type="term" value="C:proton-transporting ATP synthase complex"/>
    <property type="evidence" value="ECO:0007669"/>
    <property type="project" value="UniProtKB-KW"/>
</dbReference>
<dbReference type="GO" id="GO:0046933">
    <property type="term" value="F:proton-transporting ATP synthase activity, rotational mechanism"/>
    <property type="evidence" value="ECO:0007669"/>
    <property type="project" value="UniProtKB-UniRule"/>
</dbReference>
<dbReference type="Gene3D" id="1.10.520.20">
    <property type="entry name" value="N-terminal domain of the delta subunit of the F1F0-ATP synthase"/>
    <property type="match status" value="1"/>
</dbReference>
<dbReference type="HAMAP" id="MF_01416">
    <property type="entry name" value="ATP_synth_delta_bact"/>
    <property type="match status" value="1"/>
</dbReference>
<dbReference type="InterPro" id="IPR026015">
    <property type="entry name" value="ATP_synth_OSCP/delta_N_sf"/>
</dbReference>
<dbReference type="InterPro" id="IPR020781">
    <property type="entry name" value="ATPase_OSCP/d_CS"/>
</dbReference>
<dbReference type="InterPro" id="IPR000711">
    <property type="entry name" value="ATPase_OSCP/dsu"/>
</dbReference>
<dbReference type="NCBIfam" id="TIGR01145">
    <property type="entry name" value="ATP_synt_delta"/>
    <property type="match status" value="1"/>
</dbReference>
<dbReference type="PANTHER" id="PTHR11910">
    <property type="entry name" value="ATP SYNTHASE DELTA CHAIN"/>
    <property type="match status" value="1"/>
</dbReference>
<dbReference type="Pfam" id="PF00213">
    <property type="entry name" value="OSCP"/>
    <property type="match status" value="1"/>
</dbReference>
<dbReference type="PRINTS" id="PR00125">
    <property type="entry name" value="ATPASEDELTA"/>
</dbReference>
<dbReference type="SUPFAM" id="SSF47928">
    <property type="entry name" value="N-terminal domain of the delta subunit of the F1F0-ATP synthase"/>
    <property type="match status" value="1"/>
</dbReference>
<dbReference type="PROSITE" id="PS00389">
    <property type="entry name" value="ATPASE_DELTA"/>
    <property type="match status" value="1"/>
</dbReference>
<comment type="function">
    <text evidence="1">F(1)F(0) ATP synthase produces ATP from ADP in the presence of a proton or sodium gradient. F-type ATPases consist of two structural domains, F(1) containing the extramembraneous catalytic core and F(0) containing the membrane proton channel, linked together by a central stalk and a peripheral stalk. During catalysis, ATP synthesis in the catalytic domain of F(1) is coupled via a rotary mechanism of the central stalk subunits to proton translocation.</text>
</comment>
<comment type="function">
    <text evidence="1">This protein is part of the stalk that links CF(0) to CF(1). It either transmits conformational changes from CF(0) to CF(1) or is implicated in proton conduction.</text>
</comment>
<comment type="subunit">
    <text evidence="1">F-type ATPases have 2 components, F(1) - the catalytic core - and F(0) - the membrane proton channel. F(1) has five subunits: alpha(3), beta(3), gamma(1), delta(1), epsilon(1). F(0) has three main subunits: a(1), b(2) and c(10-14). The alpha and beta chains form an alternating ring which encloses part of the gamma chain. F(1) is attached to F(0) by a central stalk formed by the gamma and epsilon chains, while a peripheral stalk is formed by the delta and b chains.</text>
</comment>
<comment type="subcellular location">
    <subcellularLocation>
        <location evidence="1">Cell inner membrane</location>
        <topology evidence="1">Peripheral membrane protein</topology>
    </subcellularLocation>
</comment>
<comment type="similarity">
    <text evidence="1">Belongs to the ATPase delta chain family.</text>
</comment>
<feature type="chain" id="PRO_1000184705" description="ATP synthase subunit delta">
    <location>
        <begin position="1"/>
        <end position="189"/>
    </location>
</feature>
<accession>Q5HC94</accession>
<accession>Q5FCN1</accession>
<organism>
    <name type="scientific">Ehrlichia ruminantium (strain Welgevonden)</name>
    <dbReference type="NCBI Taxonomy" id="254945"/>
    <lineage>
        <taxon>Bacteria</taxon>
        <taxon>Pseudomonadati</taxon>
        <taxon>Pseudomonadota</taxon>
        <taxon>Alphaproteobacteria</taxon>
        <taxon>Rickettsiales</taxon>
        <taxon>Anaplasmataceae</taxon>
        <taxon>Ehrlichia</taxon>
    </lineage>
</organism>
<protein>
    <recommendedName>
        <fullName evidence="1">ATP synthase subunit delta</fullName>
    </recommendedName>
    <alternativeName>
        <fullName evidence="1">ATP synthase F(1) sector subunit delta</fullName>
    </alternativeName>
    <alternativeName>
        <fullName evidence="1">F-type ATPase subunit delta</fullName>
        <shortName evidence="1">F-ATPase subunit delta</shortName>
    </alternativeName>
</protein>
<reference key="1">
    <citation type="journal article" date="2005" name="Proc. Natl. Acad. Sci. U.S.A.">
        <title>The genome of the heartwater agent Ehrlichia ruminantium contains multiple tandem repeats of actively variable copy number.</title>
        <authorList>
            <person name="Collins N.E."/>
            <person name="Liebenberg J."/>
            <person name="de Villiers E.P."/>
            <person name="Brayton K.A."/>
            <person name="Louw E."/>
            <person name="Pretorius A."/>
            <person name="Faber F.E."/>
            <person name="van Heerden H."/>
            <person name="Josemans A."/>
            <person name="van Kleef M."/>
            <person name="Steyn H.C."/>
            <person name="van Strijp M.F."/>
            <person name="Zweygarth E."/>
            <person name="Jongejan F."/>
            <person name="Maillard J.C."/>
            <person name="Berthier D."/>
            <person name="Botha M."/>
            <person name="Joubert F."/>
            <person name="Corton C.H."/>
            <person name="Thomson N.R."/>
            <person name="Allsopp M.T."/>
            <person name="Allsopp B.A."/>
        </authorList>
    </citation>
    <scope>NUCLEOTIDE SEQUENCE [LARGE SCALE GENOMIC DNA]</scope>
    <source>
        <strain>Welgevonden</strain>
    </source>
</reference>
<reference key="2">
    <citation type="journal article" date="2006" name="J. Bacteriol.">
        <title>Comparative genomic analysis of three strains of Ehrlichia ruminantium reveals an active process of genome size plasticity.</title>
        <authorList>
            <person name="Frutos R."/>
            <person name="Viari A."/>
            <person name="Ferraz C."/>
            <person name="Morgat A."/>
            <person name="Eychenie S."/>
            <person name="Kandassamy Y."/>
            <person name="Chantal I."/>
            <person name="Bensaid A."/>
            <person name="Coissac E."/>
            <person name="Vachiery N."/>
            <person name="Demaille J."/>
            <person name="Martinez D."/>
        </authorList>
    </citation>
    <scope>NUCLEOTIDE SEQUENCE [LARGE SCALE GENOMIC DNA]</scope>
    <source>
        <strain>Welgevonden</strain>
    </source>
</reference>
<keyword id="KW-0066">ATP synthesis</keyword>
<keyword id="KW-0997">Cell inner membrane</keyword>
<keyword id="KW-1003">Cell membrane</keyword>
<keyword id="KW-0139">CF(1)</keyword>
<keyword id="KW-0375">Hydrogen ion transport</keyword>
<keyword id="KW-0406">Ion transport</keyword>
<keyword id="KW-0472">Membrane</keyword>
<keyword id="KW-0813">Transport</keyword>
<sequence>MTQYRGGYVTSCYAQALFNASVSKLNDICKGIKFIFNLSENGNNQFLSFLANPTANLKDKISVIELITNHIDTTLSRFILVVVTNNRGNMLLQIFNTFLEYVRKHNKEVSISVTSCSKLTTQEKQGICNALLEKYGKVVSITNTVDPSILGGFIIRVGFDIIDVSLNSYLQSLQELSKIAVRSMVNSKV</sequence>
<gene>
    <name evidence="1" type="primary">atpH</name>
    <name type="ordered locus">Erum0830</name>
    <name type="ordered locus">ERWE_CDS_00780</name>
</gene>